<feature type="chain" id="PRO_0000278046" description="Diaminopimelate epimerase">
    <location>
        <begin position="1"/>
        <end position="270"/>
    </location>
</feature>
<feature type="active site" description="Proton donor" evidence="1">
    <location>
        <position position="75"/>
    </location>
</feature>
<feature type="active site" description="Proton acceptor" evidence="1">
    <location>
        <position position="213"/>
    </location>
</feature>
<feature type="binding site" evidence="1">
    <location>
        <position position="15"/>
    </location>
    <ligand>
        <name>substrate</name>
    </ligand>
</feature>
<feature type="binding site" evidence="1">
    <location>
        <position position="49"/>
    </location>
    <ligand>
        <name>substrate</name>
    </ligand>
</feature>
<feature type="binding site" evidence="1">
    <location>
        <position position="66"/>
    </location>
    <ligand>
        <name>substrate</name>
    </ligand>
</feature>
<feature type="binding site" evidence="1">
    <location>
        <begin position="76"/>
        <end position="77"/>
    </location>
    <ligand>
        <name>substrate</name>
    </ligand>
</feature>
<feature type="binding site" evidence="1">
    <location>
        <position position="155"/>
    </location>
    <ligand>
        <name>substrate</name>
    </ligand>
</feature>
<feature type="binding site" evidence="1">
    <location>
        <position position="187"/>
    </location>
    <ligand>
        <name>substrate</name>
    </ligand>
</feature>
<feature type="binding site" evidence="1">
    <location>
        <begin position="204"/>
        <end position="205"/>
    </location>
    <ligand>
        <name>substrate</name>
    </ligand>
</feature>
<feature type="binding site" evidence="1">
    <location>
        <begin position="214"/>
        <end position="215"/>
    </location>
    <ligand>
        <name>substrate</name>
    </ligand>
</feature>
<feature type="site" description="Could be important to modulate the pK values of the two catalytic cysteine residues" evidence="1">
    <location>
        <position position="157"/>
    </location>
</feature>
<feature type="site" description="Could be important to modulate the pK values of the two catalytic cysteine residues" evidence="1">
    <location>
        <position position="204"/>
    </location>
</feature>
<organism>
    <name type="scientific">Rickettsia typhi (strain ATCC VR-144 / Wilmington)</name>
    <dbReference type="NCBI Taxonomy" id="257363"/>
    <lineage>
        <taxon>Bacteria</taxon>
        <taxon>Pseudomonadati</taxon>
        <taxon>Pseudomonadota</taxon>
        <taxon>Alphaproteobacteria</taxon>
        <taxon>Rickettsiales</taxon>
        <taxon>Rickettsiaceae</taxon>
        <taxon>Rickettsieae</taxon>
        <taxon>Rickettsia</taxon>
        <taxon>typhus group</taxon>
    </lineage>
</organism>
<evidence type="ECO:0000255" key="1">
    <source>
        <dbReference type="HAMAP-Rule" id="MF_00197"/>
    </source>
</evidence>
<gene>
    <name evidence="1" type="primary">dapF</name>
    <name type="ordered locus">RT0401</name>
</gene>
<reference key="1">
    <citation type="journal article" date="2004" name="J. Bacteriol.">
        <title>Complete genome sequence of Rickettsia typhi and comparison with sequences of other Rickettsiae.</title>
        <authorList>
            <person name="McLeod M.P."/>
            <person name="Qin X."/>
            <person name="Karpathy S.E."/>
            <person name="Gioia J."/>
            <person name="Highlander S.K."/>
            <person name="Fox G.E."/>
            <person name="McNeill T.Z."/>
            <person name="Jiang H."/>
            <person name="Muzny D."/>
            <person name="Jacob L.S."/>
            <person name="Hawes A.C."/>
            <person name="Sodergren E."/>
            <person name="Gill R."/>
            <person name="Hume J."/>
            <person name="Morgan M."/>
            <person name="Fan G."/>
            <person name="Amin A.G."/>
            <person name="Gibbs R.A."/>
            <person name="Hong C."/>
            <person name="Yu X.-J."/>
            <person name="Walker D.H."/>
            <person name="Weinstock G.M."/>
        </authorList>
    </citation>
    <scope>NUCLEOTIDE SEQUENCE [LARGE SCALE GENOMIC DNA]</scope>
    <source>
        <strain>ATCC VR-144 / Wilmington</strain>
    </source>
</reference>
<accession>Q68WW4</accession>
<protein>
    <recommendedName>
        <fullName evidence="1">Diaminopimelate epimerase</fullName>
        <shortName evidence="1">DAP epimerase</shortName>
        <ecNumber evidence="1">5.1.1.7</ecNumber>
    </recommendedName>
    <alternativeName>
        <fullName evidence="1">PLP-independent amino acid racemase</fullName>
    </alternativeName>
</protein>
<proteinExistence type="inferred from homology"/>
<keyword id="KW-0028">Amino-acid biosynthesis</keyword>
<keyword id="KW-0963">Cytoplasm</keyword>
<keyword id="KW-0413">Isomerase</keyword>
<keyword id="KW-0457">Lysine biosynthesis</keyword>
<name>DAPF_RICTY</name>
<sequence length="270" mass="30151">MINKINFVKMHGLGNDFVIVHKRDLATVCNLSQLAKNMADRHTGIGCDQCIIYEEYNNVYTMIIYNIDGSNAKLCGNATRCLAKLIYLDTGKKDITIMVGKKKLLCNVEAANKISVNVGNVSFNETWMPSRDRIWAFAERYMLDLKETMCVDIGNPHLIIFSKLEPQDQKIIGQKLQAKELFVDGVNVNFAEVKDNKIYLSVWERGAGLTLACGSGACGSFAAGLKLGFVHSPSTVVFKYGNLIMQEEDGNIIMQGEATFVMRGEYYCEK</sequence>
<dbReference type="EC" id="5.1.1.7" evidence="1"/>
<dbReference type="EMBL" id="AE017197">
    <property type="protein sequence ID" value="AAU03878.1"/>
    <property type="molecule type" value="Genomic_DNA"/>
</dbReference>
<dbReference type="RefSeq" id="WP_011190862.1">
    <property type="nucleotide sequence ID" value="NC_006142.1"/>
</dbReference>
<dbReference type="SMR" id="Q68WW4"/>
<dbReference type="KEGG" id="rty:RT0401"/>
<dbReference type="eggNOG" id="COG0253">
    <property type="taxonomic scope" value="Bacteria"/>
</dbReference>
<dbReference type="HOGENOM" id="CLU_053306_1_0_5"/>
<dbReference type="OrthoDB" id="9805408at2"/>
<dbReference type="UniPathway" id="UPA00034">
    <property type="reaction ID" value="UER00025"/>
</dbReference>
<dbReference type="Proteomes" id="UP000000604">
    <property type="component" value="Chromosome"/>
</dbReference>
<dbReference type="GO" id="GO:0005829">
    <property type="term" value="C:cytosol"/>
    <property type="evidence" value="ECO:0007669"/>
    <property type="project" value="TreeGrafter"/>
</dbReference>
<dbReference type="GO" id="GO:0008837">
    <property type="term" value="F:diaminopimelate epimerase activity"/>
    <property type="evidence" value="ECO:0007669"/>
    <property type="project" value="UniProtKB-UniRule"/>
</dbReference>
<dbReference type="GO" id="GO:0009089">
    <property type="term" value="P:lysine biosynthetic process via diaminopimelate"/>
    <property type="evidence" value="ECO:0007669"/>
    <property type="project" value="UniProtKB-UniRule"/>
</dbReference>
<dbReference type="Gene3D" id="3.10.310.10">
    <property type="entry name" value="Diaminopimelate Epimerase, Chain A, domain 1"/>
    <property type="match status" value="2"/>
</dbReference>
<dbReference type="HAMAP" id="MF_00197">
    <property type="entry name" value="DAP_epimerase"/>
    <property type="match status" value="1"/>
</dbReference>
<dbReference type="InterPro" id="IPR018510">
    <property type="entry name" value="DAP_epimerase_AS"/>
</dbReference>
<dbReference type="InterPro" id="IPR001653">
    <property type="entry name" value="DAP_epimerase_DapF"/>
</dbReference>
<dbReference type="NCBIfam" id="TIGR00652">
    <property type="entry name" value="DapF"/>
    <property type="match status" value="1"/>
</dbReference>
<dbReference type="PANTHER" id="PTHR31689:SF0">
    <property type="entry name" value="DIAMINOPIMELATE EPIMERASE"/>
    <property type="match status" value="1"/>
</dbReference>
<dbReference type="PANTHER" id="PTHR31689">
    <property type="entry name" value="DIAMINOPIMELATE EPIMERASE, CHLOROPLASTIC"/>
    <property type="match status" value="1"/>
</dbReference>
<dbReference type="Pfam" id="PF01678">
    <property type="entry name" value="DAP_epimerase"/>
    <property type="match status" value="2"/>
</dbReference>
<dbReference type="SUPFAM" id="SSF54506">
    <property type="entry name" value="Diaminopimelate epimerase-like"/>
    <property type="match status" value="2"/>
</dbReference>
<dbReference type="PROSITE" id="PS01326">
    <property type="entry name" value="DAP_EPIMERASE"/>
    <property type="match status" value="1"/>
</dbReference>
<comment type="function">
    <text evidence="1">Catalyzes the stereoinversion of LL-2,6-diaminopimelate (L,L-DAP) to meso-diaminopimelate (meso-DAP), a precursor of L-lysine and an essential component of the bacterial peptidoglycan.</text>
</comment>
<comment type="catalytic activity">
    <reaction evidence="1">
        <text>(2S,6S)-2,6-diaminopimelate = meso-2,6-diaminopimelate</text>
        <dbReference type="Rhea" id="RHEA:15393"/>
        <dbReference type="ChEBI" id="CHEBI:57609"/>
        <dbReference type="ChEBI" id="CHEBI:57791"/>
        <dbReference type="EC" id="5.1.1.7"/>
    </reaction>
</comment>
<comment type="pathway">
    <text evidence="1">Amino-acid biosynthesis; L-lysine biosynthesis via DAP pathway; DL-2,6-diaminopimelate from LL-2,6-diaminopimelate: step 1/1.</text>
</comment>
<comment type="subunit">
    <text evidence="1">Homodimer.</text>
</comment>
<comment type="subcellular location">
    <subcellularLocation>
        <location evidence="1">Cytoplasm</location>
    </subcellularLocation>
</comment>
<comment type="similarity">
    <text evidence="1">Belongs to the diaminopimelate epimerase family.</text>
</comment>